<dbReference type="EMBL" id="CP000468">
    <property type="protein sequence ID" value="ABJ03316.1"/>
    <property type="molecule type" value="Genomic_DNA"/>
</dbReference>
<dbReference type="RefSeq" id="WP_000459604.1">
    <property type="nucleotide sequence ID" value="NZ_CADILS010000045.1"/>
</dbReference>
<dbReference type="SMR" id="A1AI26"/>
<dbReference type="KEGG" id="ecv:APECO1_2618"/>
<dbReference type="HOGENOM" id="CLU_086034_1_0_6"/>
<dbReference type="Proteomes" id="UP000008216">
    <property type="component" value="Chromosome"/>
</dbReference>
<dbReference type="GO" id="GO:0033281">
    <property type="term" value="C:TAT protein transport complex"/>
    <property type="evidence" value="ECO:0007669"/>
    <property type="project" value="UniProtKB-UniRule"/>
</dbReference>
<dbReference type="GO" id="GO:0008320">
    <property type="term" value="F:protein transmembrane transporter activity"/>
    <property type="evidence" value="ECO:0007669"/>
    <property type="project" value="UniProtKB-UniRule"/>
</dbReference>
<dbReference type="GO" id="GO:0043953">
    <property type="term" value="P:protein transport by the Tat complex"/>
    <property type="evidence" value="ECO:0007669"/>
    <property type="project" value="UniProtKB-UniRule"/>
</dbReference>
<dbReference type="FunFam" id="1.20.5.3310:FF:000002">
    <property type="entry name" value="Sec-independent protein translocase protein TatB"/>
    <property type="match status" value="1"/>
</dbReference>
<dbReference type="Gene3D" id="1.20.5.3310">
    <property type="match status" value="1"/>
</dbReference>
<dbReference type="HAMAP" id="MF_00237">
    <property type="entry name" value="TatB"/>
    <property type="match status" value="1"/>
</dbReference>
<dbReference type="InterPro" id="IPR018448">
    <property type="entry name" value="TatB"/>
</dbReference>
<dbReference type="NCBIfam" id="TIGR01410">
    <property type="entry name" value="tatB"/>
    <property type="match status" value="1"/>
</dbReference>
<dbReference type="PANTHER" id="PTHR33162">
    <property type="entry name" value="SEC-INDEPENDENT PROTEIN TRANSLOCASE PROTEIN TATA, CHLOROPLASTIC"/>
    <property type="match status" value="1"/>
</dbReference>
<dbReference type="PANTHER" id="PTHR33162:SF1">
    <property type="entry name" value="SEC-INDEPENDENT PROTEIN TRANSLOCASE PROTEIN TATA, CHLOROPLASTIC"/>
    <property type="match status" value="1"/>
</dbReference>
<dbReference type="PRINTS" id="PR01506">
    <property type="entry name" value="TATBPROTEIN"/>
</dbReference>
<proteinExistence type="inferred from homology"/>
<accession>A1AI26</accession>
<reference key="1">
    <citation type="journal article" date="2007" name="J. Bacteriol.">
        <title>The genome sequence of avian pathogenic Escherichia coli strain O1:K1:H7 shares strong similarities with human extraintestinal pathogenic E. coli genomes.</title>
        <authorList>
            <person name="Johnson T.J."/>
            <person name="Kariyawasam S."/>
            <person name="Wannemuehler Y."/>
            <person name="Mangiamele P."/>
            <person name="Johnson S.J."/>
            <person name="Doetkott C."/>
            <person name="Skyberg J.A."/>
            <person name="Lynne A.M."/>
            <person name="Johnson J.R."/>
            <person name="Nolan L.K."/>
        </authorList>
    </citation>
    <scope>NUCLEOTIDE SEQUENCE [LARGE SCALE GENOMIC DNA]</scope>
</reference>
<organism>
    <name type="scientific">Escherichia coli O1:K1 / APEC</name>
    <dbReference type="NCBI Taxonomy" id="405955"/>
    <lineage>
        <taxon>Bacteria</taxon>
        <taxon>Pseudomonadati</taxon>
        <taxon>Pseudomonadota</taxon>
        <taxon>Gammaproteobacteria</taxon>
        <taxon>Enterobacterales</taxon>
        <taxon>Enterobacteriaceae</taxon>
        <taxon>Escherichia</taxon>
    </lineage>
</organism>
<sequence>MFDIGFSELLLVFIIGLVVLGPQRLPVAVKTVAGWIRALRSLATTVQNELTQELKLQEFQDSLKKVEKASLTSLTPELKASMDELRQAAESMKRSYVANDPEKASDEAHTIHNPVVKDNETAHEGVTPAAAQTQASSPEQKPETTPEPVVKPAADAEPKTAAPSPSSSDKP</sequence>
<comment type="function">
    <text evidence="1">Part of the twin-arginine translocation (Tat) system that transports large folded proteins containing a characteristic twin-arginine motif in their signal peptide across membranes. Together with TatC, TatB is part of a receptor directly interacting with Tat signal peptides. TatB may form an oligomeric binding site that transiently accommodates folded Tat precursor proteins before their translocation.</text>
</comment>
<comment type="subunit">
    <text evidence="1">The Tat system comprises two distinct complexes: a TatABC complex, containing multiple copies of TatA, TatB and TatC subunits, and a separate TatA complex, containing only TatA subunits. Substrates initially bind to the TatABC complex, which probably triggers association of the separate TatA complex to form the active translocon.</text>
</comment>
<comment type="subcellular location">
    <subcellularLocation>
        <location evidence="1">Cell inner membrane</location>
        <topology evidence="1">Single-pass membrane protein</topology>
    </subcellularLocation>
</comment>
<comment type="similarity">
    <text evidence="1">Belongs to the TatB family.</text>
</comment>
<feature type="chain" id="PRO_0000301169" description="Sec-independent protein translocase protein TatB">
    <location>
        <begin position="1"/>
        <end position="171"/>
    </location>
</feature>
<feature type="transmembrane region" description="Helical" evidence="1">
    <location>
        <begin position="1"/>
        <end position="21"/>
    </location>
</feature>
<feature type="region of interest" description="Disordered" evidence="2">
    <location>
        <begin position="89"/>
        <end position="171"/>
    </location>
</feature>
<feature type="compositionally biased region" description="Basic and acidic residues" evidence="2">
    <location>
        <begin position="100"/>
        <end position="123"/>
    </location>
</feature>
<feature type="compositionally biased region" description="Polar residues" evidence="2">
    <location>
        <begin position="130"/>
        <end position="139"/>
    </location>
</feature>
<keyword id="KW-0997">Cell inner membrane</keyword>
<keyword id="KW-1003">Cell membrane</keyword>
<keyword id="KW-0472">Membrane</keyword>
<keyword id="KW-0653">Protein transport</keyword>
<keyword id="KW-1185">Reference proteome</keyword>
<keyword id="KW-0811">Translocation</keyword>
<keyword id="KW-0812">Transmembrane</keyword>
<keyword id="KW-1133">Transmembrane helix</keyword>
<keyword id="KW-0813">Transport</keyword>
<protein>
    <recommendedName>
        <fullName evidence="1">Sec-independent protein translocase protein TatB</fullName>
    </recommendedName>
</protein>
<evidence type="ECO:0000255" key="1">
    <source>
        <dbReference type="HAMAP-Rule" id="MF_00237"/>
    </source>
</evidence>
<evidence type="ECO:0000256" key="2">
    <source>
        <dbReference type="SAM" id="MobiDB-lite"/>
    </source>
</evidence>
<gene>
    <name evidence="1" type="primary">tatB</name>
    <name type="ordered locus">Ecok1_38220</name>
    <name type="ORF">APECO1_2618</name>
</gene>
<name>TATB_ECOK1</name>